<accession>A9M817</accession>
<gene>
    <name evidence="1" type="primary">rpmF</name>
    <name type="ordered locus">BCAN_A1813</name>
</gene>
<reference key="1">
    <citation type="submission" date="2007-10" db="EMBL/GenBank/DDBJ databases">
        <title>Brucella canis ATCC 23365 whole genome shotgun sequencing project.</title>
        <authorList>
            <person name="Setubal J.C."/>
            <person name="Bowns C."/>
            <person name="Boyle S."/>
            <person name="Crasta O.R."/>
            <person name="Czar M.J."/>
            <person name="Dharmanolla C."/>
            <person name="Gillespie J.J."/>
            <person name="Kenyon R.W."/>
            <person name="Lu J."/>
            <person name="Mane S."/>
            <person name="Mohapatra S."/>
            <person name="Nagrani S."/>
            <person name="Purkayastha A."/>
            <person name="Rajasimha H.K."/>
            <person name="Shallom J.M."/>
            <person name="Shallom S."/>
            <person name="Shukla M."/>
            <person name="Snyder E.E."/>
            <person name="Sobral B.W."/>
            <person name="Wattam A.R."/>
            <person name="Will R."/>
            <person name="Williams K."/>
            <person name="Yoo H."/>
            <person name="Bruce D."/>
            <person name="Detter C."/>
            <person name="Munk C."/>
            <person name="Brettin T.S."/>
        </authorList>
    </citation>
    <scope>NUCLEOTIDE SEQUENCE [LARGE SCALE GENOMIC DNA]</scope>
    <source>
        <strain>ATCC 23365 / NCTC 10854 / RM-666</strain>
    </source>
</reference>
<evidence type="ECO:0000255" key="1">
    <source>
        <dbReference type="HAMAP-Rule" id="MF_00340"/>
    </source>
</evidence>
<evidence type="ECO:0000256" key="2">
    <source>
        <dbReference type="SAM" id="MobiDB-lite"/>
    </source>
</evidence>
<evidence type="ECO:0000305" key="3"/>
<sequence>MAVPKRKTSPSRRGMRRSADALKAPTYVEDKNSGELRRPHHIDLKSGMYRGRQVLEPKE</sequence>
<comment type="similarity">
    <text evidence="1">Belongs to the bacterial ribosomal protein bL32 family.</text>
</comment>
<protein>
    <recommendedName>
        <fullName evidence="1">Large ribosomal subunit protein bL32</fullName>
    </recommendedName>
    <alternativeName>
        <fullName evidence="3">50S ribosomal protein L32</fullName>
    </alternativeName>
</protein>
<organism>
    <name type="scientific">Brucella canis (strain ATCC 23365 / NCTC 10854 / RM-666)</name>
    <dbReference type="NCBI Taxonomy" id="483179"/>
    <lineage>
        <taxon>Bacteria</taxon>
        <taxon>Pseudomonadati</taxon>
        <taxon>Pseudomonadota</taxon>
        <taxon>Alphaproteobacteria</taxon>
        <taxon>Hyphomicrobiales</taxon>
        <taxon>Brucellaceae</taxon>
        <taxon>Brucella/Ochrobactrum group</taxon>
        <taxon>Brucella</taxon>
    </lineage>
</organism>
<keyword id="KW-1185">Reference proteome</keyword>
<keyword id="KW-0687">Ribonucleoprotein</keyword>
<keyword id="KW-0689">Ribosomal protein</keyword>
<proteinExistence type="inferred from homology"/>
<name>RL32_BRUC2</name>
<feature type="chain" id="PRO_1000079321" description="Large ribosomal subunit protein bL32">
    <location>
        <begin position="1"/>
        <end position="59"/>
    </location>
</feature>
<feature type="region of interest" description="Disordered" evidence="2">
    <location>
        <begin position="1"/>
        <end position="59"/>
    </location>
</feature>
<feature type="compositionally biased region" description="Basic residues" evidence="2">
    <location>
        <begin position="1"/>
        <end position="16"/>
    </location>
</feature>
<feature type="compositionally biased region" description="Basic and acidic residues" evidence="2">
    <location>
        <begin position="28"/>
        <end position="44"/>
    </location>
</feature>
<dbReference type="EMBL" id="CP000872">
    <property type="protein sequence ID" value="ABX62815.1"/>
    <property type="molecule type" value="Genomic_DNA"/>
</dbReference>
<dbReference type="RefSeq" id="WP_002964856.1">
    <property type="nucleotide sequence ID" value="NC_010103.1"/>
</dbReference>
<dbReference type="SMR" id="A9M817"/>
<dbReference type="GeneID" id="97533091"/>
<dbReference type="KEGG" id="bcs:BCAN_A1813"/>
<dbReference type="HOGENOM" id="CLU_129084_2_2_5"/>
<dbReference type="Proteomes" id="UP000001385">
    <property type="component" value="Chromosome I"/>
</dbReference>
<dbReference type="GO" id="GO:0015934">
    <property type="term" value="C:large ribosomal subunit"/>
    <property type="evidence" value="ECO:0007669"/>
    <property type="project" value="InterPro"/>
</dbReference>
<dbReference type="GO" id="GO:0003735">
    <property type="term" value="F:structural constituent of ribosome"/>
    <property type="evidence" value="ECO:0007669"/>
    <property type="project" value="InterPro"/>
</dbReference>
<dbReference type="GO" id="GO:0006412">
    <property type="term" value="P:translation"/>
    <property type="evidence" value="ECO:0007669"/>
    <property type="project" value="UniProtKB-UniRule"/>
</dbReference>
<dbReference type="Gene3D" id="1.20.5.640">
    <property type="entry name" value="Single helix bin"/>
    <property type="match status" value="1"/>
</dbReference>
<dbReference type="HAMAP" id="MF_00340">
    <property type="entry name" value="Ribosomal_bL32"/>
    <property type="match status" value="1"/>
</dbReference>
<dbReference type="InterPro" id="IPR002677">
    <property type="entry name" value="Ribosomal_bL32"/>
</dbReference>
<dbReference type="InterPro" id="IPR044957">
    <property type="entry name" value="Ribosomal_bL32_bact"/>
</dbReference>
<dbReference type="InterPro" id="IPR011332">
    <property type="entry name" value="Ribosomal_zn-bd"/>
</dbReference>
<dbReference type="NCBIfam" id="TIGR01031">
    <property type="entry name" value="rpmF_bact"/>
    <property type="match status" value="1"/>
</dbReference>
<dbReference type="PANTHER" id="PTHR35534">
    <property type="entry name" value="50S RIBOSOMAL PROTEIN L32"/>
    <property type="match status" value="1"/>
</dbReference>
<dbReference type="PANTHER" id="PTHR35534:SF1">
    <property type="entry name" value="LARGE RIBOSOMAL SUBUNIT PROTEIN BL32"/>
    <property type="match status" value="1"/>
</dbReference>
<dbReference type="Pfam" id="PF01783">
    <property type="entry name" value="Ribosomal_L32p"/>
    <property type="match status" value="1"/>
</dbReference>
<dbReference type="SUPFAM" id="SSF57829">
    <property type="entry name" value="Zn-binding ribosomal proteins"/>
    <property type="match status" value="1"/>
</dbReference>